<gene>
    <name evidence="5" type="primary">bchQ</name>
    <name evidence="8" type="ordered locus">CT1777</name>
</gene>
<evidence type="ECO:0000255" key="1">
    <source>
        <dbReference type="PROSITE-ProRule" id="PRU00666"/>
    </source>
</evidence>
<evidence type="ECO:0000255" key="2">
    <source>
        <dbReference type="PROSITE-ProRule" id="PRU00780"/>
    </source>
</evidence>
<evidence type="ECO:0000255" key="3">
    <source>
        <dbReference type="PROSITE-ProRule" id="PRU01266"/>
    </source>
</evidence>
<evidence type="ECO:0000269" key="4">
    <source>
    </source>
</evidence>
<evidence type="ECO:0000303" key="5">
    <source>
    </source>
</evidence>
<evidence type="ECO:0000305" key="6"/>
<evidence type="ECO:0000305" key="7">
    <source>
    </source>
</evidence>
<evidence type="ECO:0000312" key="8">
    <source>
        <dbReference type="EMBL" id="AAM72998.1"/>
    </source>
</evidence>
<evidence type="ECO:0000312" key="9">
    <source>
        <dbReference type="Proteomes" id="UP000001007"/>
    </source>
</evidence>
<keyword id="KW-0004">4Fe-4S</keyword>
<keyword id="KW-0077">Bacteriochlorophyll biosynthesis</keyword>
<keyword id="KW-0149">Chlorophyll biosynthesis</keyword>
<keyword id="KW-0963">Cytoplasm</keyword>
<keyword id="KW-0408">Iron</keyword>
<keyword id="KW-0411">Iron-sulfur</keyword>
<keyword id="KW-0479">Metal-binding</keyword>
<keyword id="KW-0489">Methyltransferase</keyword>
<keyword id="KW-1185">Reference proteome</keyword>
<keyword id="KW-0949">S-adenosyl-L-methionine</keyword>
<keyword id="KW-0808">Transferase</keyword>
<name>BCHQ_CHLTE</name>
<proteinExistence type="evidence at protein level"/>
<feature type="chain" id="PRO_0000444473" description="Bacteriochlorophyllide d C-8(2)-methyltransferase">
    <location>
        <begin position="1"/>
        <end position="451"/>
    </location>
</feature>
<feature type="domain" description="B12-binding" evidence="1">
    <location>
        <begin position="1"/>
        <end position="118"/>
    </location>
</feature>
<feature type="domain" description="Radical SAM core" evidence="3">
    <location>
        <begin position="148"/>
        <end position="377"/>
    </location>
</feature>
<feature type="binding site" evidence="2">
    <location>
        <position position="162"/>
    </location>
    <ligand>
        <name>[4Fe-4S] cluster</name>
        <dbReference type="ChEBI" id="CHEBI:49883"/>
        <note>4Fe-4S-S-AdoMet</note>
    </ligand>
</feature>
<feature type="binding site" evidence="2">
    <location>
        <position position="166"/>
    </location>
    <ligand>
        <name>[4Fe-4S] cluster</name>
        <dbReference type="ChEBI" id="CHEBI:49883"/>
        <note>4Fe-4S-S-AdoMet</note>
    </ligand>
</feature>
<feature type="binding site" evidence="2">
    <location>
        <position position="169"/>
    </location>
    <ligand>
        <name>[4Fe-4S] cluster</name>
        <dbReference type="ChEBI" id="CHEBI:49883"/>
        <note>4Fe-4S-S-AdoMet</note>
    </ligand>
</feature>
<accession>Q8KBK9</accession>
<comment type="function">
    <text evidence="4">Involved in the biosynthesis of the major light-harvesting pigment bacteriochlorophyll c (BChlc), which confers a significant competitive advantage to green sulfur bacteria living at limiting red and near-infrared light intensities. BchQ is a methyltransferase that adds two consecutive methyl groups to the ethyl carbon at the C-8(2) position of 8,12-diethyl-3-vinylbacteriochlorophyllide d to yield 12-ethyl-8-isobutyl-3-vinylbacteriochlorophyllide d.</text>
</comment>
<comment type="catalytic activity">
    <reaction evidence="4">
        <text>8,12-diethyl-3-vinylbacteriochlorophyllide d + S-adenosyl-L-methionine = 12-ethyl-8-propyl-3-vinylbacteriochlorophyllide d + S-adenosyl-L-homocysteine + H(+)</text>
        <dbReference type="Rhea" id="RHEA:49172"/>
        <dbReference type="ChEBI" id="CHEBI:15378"/>
        <dbReference type="ChEBI" id="CHEBI:57856"/>
        <dbReference type="ChEBI" id="CHEBI:59789"/>
        <dbReference type="ChEBI" id="CHEBI:90964"/>
        <dbReference type="ChEBI" id="CHEBI:90966"/>
        <dbReference type="EC" id="2.1.1.332"/>
    </reaction>
</comment>
<comment type="catalytic activity">
    <reaction evidence="4">
        <text>12-ethyl-8-propyl-3-vinylbacteriochlorophyllide d + S-adenosyl-L-methionine = 12-ethyl-8-isobutyl-3-vinylbacteriochlorophyllide d + S-adenosyl-L-homocysteine + H(+)</text>
        <dbReference type="Rhea" id="RHEA:49176"/>
        <dbReference type="ChEBI" id="CHEBI:15378"/>
        <dbReference type="ChEBI" id="CHEBI:57856"/>
        <dbReference type="ChEBI" id="CHEBI:59789"/>
        <dbReference type="ChEBI" id="CHEBI:90966"/>
        <dbReference type="ChEBI" id="CHEBI:90967"/>
        <dbReference type="EC" id="2.1.1.332"/>
    </reaction>
</comment>
<comment type="cofactor">
    <cofactor evidence="2">
        <name>[4Fe-4S] cluster</name>
        <dbReference type="ChEBI" id="CHEBI:49883"/>
    </cofactor>
    <text evidence="2">Binds 1 [4Fe-4S] cluster. The cluster is coordinated with 3 cysteines and an exchangeable S-adenosyl-L-methionine.</text>
</comment>
<comment type="pathway">
    <text evidence="7">Porphyrin-containing compound metabolism; bacteriochlorophyll biosynthesis (light-independent).</text>
</comment>
<comment type="subcellular location">
    <subcellularLocation>
        <location evidence="2">Cytoplasm</location>
    </subcellularLocation>
</comment>
<comment type="disruption phenotype">
    <text evidence="4">Cells lacking this gene produce bacteriochlorophyll c (BChlc) that is not methylated at C-8(2) and show a growth rate that decreases to 60% of that of the wild-type at low light intensity. Double mutants lacking both bchR and bchQ produce bacteriochlorophyll c (BChlc) that is not methylated at C-8(2) and C-12(1), and show a growth rate that decreases to 41% of that of the wild-type at low light intensity.</text>
</comment>
<comment type="similarity">
    <text evidence="6">Belongs to the radical SAM superfamily.</text>
</comment>
<sequence>MDDDSNQKPLFHMALGVLTSLTPPQHHIELVDEHFHDKINYDGDYDMVGITSRTIEATRAYEIADEFRKRGKTVVLGGLHISFNPEEAAAHADCIVVGEADNLWTTLLDDVANNRLKERYDSKDFPPVKAITPLDYARIAKASKRTKVDGTKSIPIYVTRGCPFNCSFCVTPNFTGKQYRVQDPKLLKHQIEEAKKYFFKANGKNSKPWFMLTDENLGINKKKLWESLDLLKECDITFSVFLSINFLEDPTTVKKLVDAGCNFVLAGLESIKQSTLEAYNKGHVNSAEKYSKIIEDCRKAGLNIQGNFLFNPAIDTFEDIDELVQFVKKNHIFMPIFQIITPYPGTQMYHEYRESGLITIEDWEKYNALHLVIKSDRYEPLLFQYKVLKSYVEVYTWKEILLRTLYNPRKLINLVTSIAFKKHLAAQLKAFERNHKMNPAMLSGVKPVMNG</sequence>
<protein>
    <recommendedName>
        <fullName evidence="5">Bacteriochlorophyllide d C-8(2)-methyltransferase</fullName>
        <ecNumber evidence="4">2.1.1.332</ecNumber>
    </recommendedName>
</protein>
<reference key="1">
    <citation type="journal article" date="2002" name="Proc. Natl. Acad. Sci. U.S.A.">
        <title>The complete genome sequence of Chlorobium tepidum TLS, a photosynthetic, anaerobic, green-sulfur bacterium.</title>
        <authorList>
            <person name="Eisen J.A."/>
            <person name="Nelson K.E."/>
            <person name="Paulsen I.T."/>
            <person name="Heidelberg J.F."/>
            <person name="Wu M."/>
            <person name="Dodson R.J."/>
            <person name="DeBoy R.T."/>
            <person name="Gwinn M.L."/>
            <person name="Nelson W.C."/>
            <person name="Haft D.H."/>
            <person name="Hickey E.K."/>
            <person name="Peterson J.D."/>
            <person name="Durkin A.S."/>
            <person name="Kolonay J.F."/>
            <person name="Yang F."/>
            <person name="Holt I.E."/>
            <person name="Umayam L.A."/>
            <person name="Mason T.M."/>
            <person name="Brenner M."/>
            <person name="Shea T.P."/>
            <person name="Parksey D.S."/>
            <person name="Nierman W.C."/>
            <person name="Feldblyum T.V."/>
            <person name="Hansen C.L."/>
            <person name="Craven M.B."/>
            <person name="Radune D."/>
            <person name="Vamathevan J.J."/>
            <person name="Khouri H.M."/>
            <person name="White O."/>
            <person name="Gruber T.M."/>
            <person name="Ketchum K.A."/>
            <person name="Venter J.C."/>
            <person name="Tettelin H."/>
            <person name="Bryant D.A."/>
            <person name="Fraser C.M."/>
        </authorList>
    </citation>
    <scope>NUCLEOTIDE SEQUENCE [LARGE SCALE GENOMIC DNA]</scope>
    <source>
        <strain evidence="9">ATCC 49652 / DSM 12025 / NBRC 103806 / TLS</strain>
    </source>
</reference>
<reference key="2">
    <citation type="journal article" date="2007" name="J. Bacteriol.">
        <title>Bacteriochlorophyllide c C-8(2) and C-12(1) methyltransferases are essential for adaptation to low light in Chlorobaculum tepidum.</title>
        <authorList>
            <person name="Gomez Maqueo Chew A."/>
            <person name="Frigaard N.U."/>
            <person name="Bryant D.A."/>
        </authorList>
    </citation>
    <scope>FUNCTION</scope>
    <scope>CATALYTIC ACTIVITY</scope>
    <scope>DISRUPTION PHENOTYPE</scope>
    <scope>PATHWAY</scope>
    <source>
        <strain evidence="9">ATCC 49652 / DSM 12025 / NBRC 103806 / TLS</strain>
    </source>
</reference>
<organism>
    <name type="scientific">Chlorobaculum tepidum (strain ATCC 49652 / DSM 12025 / NBRC 103806 / TLS)</name>
    <name type="common">Chlorobium tepidum</name>
    <dbReference type="NCBI Taxonomy" id="194439"/>
    <lineage>
        <taxon>Bacteria</taxon>
        <taxon>Pseudomonadati</taxon>
        <taxon>Chlorobiota</taxon>
        <taxon>Chlorobiia</taxon>
        <taxon>Chlorobiales</taxon>
        <taxon>Chlorobiaceae</taxon>
        <taxon>Chlorobaculum</taxon>
    </lineage>
</organism>
<dbReference type="EC" id="2.1.1.332" evidence="4"/>
<dbReference type="EMBL" id="AE006470">
    <property type="protein sequence ID" value="AAM72998.1"/>
    <property type="molecule type" value="Genomic_DNA"/>
</dbReference>
<dbReference type="RefSeq" id="NP_662656.1">
    <property type="nucleotide sequence ID" value="NC_002932.3"/>
</dbReference>
<dbReference type="SMR" id="Q8KBK9"/>
<dbReference type="STRING" id="194439.CT1777"/>
<dbReference type="DNASU" id="1008134"/>
<dbReference type="EnsemblBacteria" id="AAM72998">
    <property type="protein sequence ID" value="AAM72998"/>
    <property type="gene ID" value="CT1777"/>
</dbReference>
<dbReference type="KEGG" id="cte:CT1777"/>
<dbReference type="PATRIC" id="fig|194439.7.peg.1611"/>
<dbReference type="eggNOG" id="COG1032">
    <property type="taxonomic scope" value="Bacteria"/>
</dbReference>
<dbReference type="HOGENOM" id="CLU_021572_5_1_10"/>
<dbReference type="OrthoDB" id="9801424at2"/>
<dbReference type="BioCyc" id="MetaCyc:MONOMER-19705"/>
<dbReference type="UniPathway" id="UPA00671"/>
<dbReference type="Proteomes" id="UP000001007">
    <property type="component" value="Chromosome"/>
</dbReference>
<dbReference type="GO" id="GO:0005829">
    <property type="term" value="C:cytosol"/>
    <property type="evidence" value="ECO:0007669"/>
    <property type="project" value="TreeGrafter"/>
</dbReference>
<dbReference type="GO" id="GO:0051539">
    <property type="term" value="F:4 iron, 4 sulfur cluster binding"/>
    <property type="evidence" value="ECO:0007669"/>
    <property type="project" value="UniProtKB-KW"/>
</dbReference>
<dbReference type="GO" id="GO:0031419">
    <property type="term" value="F:cobalamin binding"/>
    <property type="evidence" value="ECO:0007669"/>
    <property type="project" value="InterPro"/>
</dbReference>
<dbReference type="GO" id="GO:0046872">
    <property type="term" value="F:metal ion binding"/>
    <property type="evidence" value="ECO:0007669"/>
    <property type="project" value="UniProtKB-KW"/>
</dbReference>
<dbReference type="GO" id="GO:0008168">
    <property type="term" value="F:methyltransferase activity"/>
    <property type="evidence" value="ECO:0007669"/>
    <property type="project" value="UniProtKB-KW"/>
</dbReference>
<dbReference type="GO" id="GO:0036070">
    <property type="term" value="P:light-independent bacteriochlorophyll biosynthetic process"/>
    <property type="evidence" value="ECO:0007669"/>
    <property type="project" value="UniProtKB-UniPathway"/>
</dbReference>
<dbReference type="GO" id="GO:0032259">
    <property type="term" value="P:methylation"/>
    <property type="evidence" value="ECO:0007669"/>
    <property type="project" value="UniProtKB-KW"/>
</dbReference>
<dbReference type="CDD" id="cd01335">
    <property type="entry name" value="Radical_SAM"/>
    <property type="match status" value="1"/>
</dbReference>
<dbReference type="CDD" id="cd02068">
    <property type="entry name" value="radical_SAM_B12_BD"/>
    <property type="match status" value="1"/>
</dbReference>
<dbReference type="Gene3D" id="3.40.50.280">
    <property type="entry name" value="Cobalamin-binding domain"/>
    <property type="match status" value="1"/>
</dbReference>
<dbReference type="Gene3D" id="3.80.30.20">
    <property type="entry name" value="tm_1862 like domain"/>
    <property type="match status" value="1"/>
</dbReference>
<dbReference type="InterPro" id="IPR034498">
    <property type="entry name" value="Bacteriochlorophyll_C8_MT"/>
</dbReference>
<dbReference type="InterPro" id="IPR006158">
    <property type="entry name" value="Cobalamin-bd"/>
</dbReference>
<dbReference type="InterPro" id="IPR006638">
    <property type="entry name" value="Elp3/MiaA/NifB-like_rSAM"/>
</dbReference>
<dbReference type="InterPro" id="IPR020612">
    <property type="entry name" value="Methylthiotransferase_CS"/>
</dbReference>
<dbReference type="InterPro" id="IPR007197">
    <property type="entry name" value="rSAM"/>
</dbReference>
<dbReference type="InterPro" id="IPR023404">
    <property type="entry name" value="rSAM_horseshoe"/>
</dbReference>
<dbReference type="InterPro" id="IPR051198">
    <property type="entry name" value="Tetrapyrrole_Bchl_Biosynth_MTs"/>
</dbReference>
<dbReference type="PANTHER" id="PTHR43409">
    <property type="entry name" value="ANAEROBIC MAGNESIUM-PROTOPORPHYRIN IX MONOMETHYL ESTER CYCLASE-RELATED"/>
    <property type="match status" value="1"/>
</dbReference>
<dbReference type="PANTHER" id="PTHR43409:SF7">
    <property type="entry name" value="BLL1977 PROTEIN"/>
    <property type="match status" value="1"/>
</dbReference>
<dbReference type="Pfam" id="PF02310">
    <property type="entry name" value="B12-binding"/>
    <property type="match status" value="1"/>
</dbReference>
<dbReference type="Pfam" id="PF04055">
    <property type="entry name" value="Radical_SAM"/>
    <property type="match status" value="1"/>
</dbReference>
<dbReference type="SFLD" id="SFLDG01082">
    <property type="entry name" value="B12-binding_domain_containing"/>
    <property type="match status" value="1"/>
</dbReference>
<dbReference type="SFLD" id="SFLDF00307">
    <property type="entry name" value="bacteriochlorophyll_C8_methylt"/>
    <property type="match status" value="1"/>
</dbReference>
<dbReference type="SMART" id="SM00729">
    <property type="entry name" value="Elp3"/>
    <property type="match status" value="1"/>
</dbReference>
<dbReference type="SUPFAM" id="SSF102114">
    <property type="entry name" value="Radical SAM enzymes"/>
    <property type="match status" value="1"/>
</dbReference>
<dbReference type="PROSITE" id="PS51332">
    <property type="entry name" value="B12_BINDING"/>
    <property type="match status" value="1"/>
</dbReference>
<dbReference type="PROSITE" id="PS01278">
    <property type="entry name" value="MTTASE_RADICAL"/>
    <property type="match status" value="1"/>
</dbReference>
<dbReference type="PROSITE" id="PS51918">
    <property type="entry name" value="RADICAL_SAM"/>
    <property type="match status" value="1"/>
</dbReference>